<gene>
    <name type="primary">ROLC3</name>
</gene>
<dbReference type="EC" id="3.2.1.-"/>
<dbReference type="EMBL" id="EU642408">
    <property type="protein sequence ID" value="ACD03674.1"/>
    <property type="molecule type" value="Genomic_DNA"/>
</dbReference>
<dbReference type="SMR" id="B2ZCQ2"/>
<dbReference type="GO" id="GO:0008422">
    <property type="term" value="F:beta-glucosidase activity"/>
    <property type="evidence" value="ECO:0007669"/>
    <property type="project" value="InterPro"/>
</dbReference>
<dbReference type="GO" id="GO:0005975">
    <property type="term" value="P:carbohydrate metabolic process"/>
    <property type="evidence" value="ECO:0007669"/>
    <property type="project" value="InterPro"/>
</dbReference>
<dbReference type="GO" id="GO:0009691">
    <property type="term" value="P:cytokinin biosynthetic process"/>
    <property type="evidence" value="ECO:0007669"/>
    <property type="project" value="UniProtKB-KW"/>
</dbReference>
<dbReference type="InterPro" id="IPR006065">
    <property type="entry name" value="Glyco_hydro_41"/>
</dbReference>
<dbReference type="PRINTS" id="PR00746">
    <property type="entry name" value="GLHYDRLASE41"/>
</dbReference>
<evidence type="ECO:0000250" key="1"/>
<sequence>MAEDDLCSLFFKLKVEDVTSSDELARHMKNASNERKPLIEPGENQSMDIDEEGGSVGHGLLYLYVDCPTMMLCFYGGSLPYNWMQGALLTNLPPYQHDVTLDEVNRGLRQASGFFGYADPMRSAYFAAFSFPERVIKLNEQMELTSTKGKCLTFDPYASTQLRFEPGELVRHGECKFAIG</sequence>
<name>ROLC3_PANGI</name>
<protein>
    <recommendedName>
        <fullName>Cytokinin-beta-glucosidase 3</fullName>
        <ecNumber>3.2.1.-</ecNumber>
    </recommendedName>
    <alternativeName>
        <fullName>Protein ROL C 3</fullName>
        <shortName>rolC3-Pg</shortName>
    </alternativeName>
</protein>
<comment type="function">
    <text evidence="1">Hydrolyzes cytokinin glucosides thus liberating free cytokinins.</text>
</comment>
<keyword id="KW-0203">Cytokinin biosynthesis</keyword>
<keyword id="KW-0326">Glycosidase</keyword>
<keyword id="KW-0378">Hydrolase</keyword>
<organism>
    <name type="scientific">Panax ginseng</name>
    <name type="common">Korean ginseng</name>
    <dbReference type="NCBI Taxonomy" id="4054"/>
    <lineage>
        <taxon>Eukaryota</taxon>
        <taxon>Viridiplantae</taxon>
        <taxon>Streptophyta</taxon>
        <taxon>Embryophyta</taxon>
        <taxon>Tracheophyta</taxon>
        <taxon>Spermatophyta</taxon>
        <taxon>Magnoliopsida</taxon>
        <taxon>eudicotyledons</taxon>
        <taxon>Gunneridae</taxon>
        <taxon>Pentapetalae</taxon>
        <taxon>asterids</taxon>
        <taxon>campanulids</taxon>
        <taxon>Apiales</taxon>
        <taxon>Araliaceae</taxon>
        <taxon>Panax</taxon>
    </lineage>
</organism>
<accession>B2ZCQ2</accession>
<reference key="1">
    <citation type="journal article" date="2009" name="Prikl. Biokhim. Mikrobiol.">
        <title>Stability of the rolC gene and its expression in 15-year-old cell cultures of Panax ginseng.</title>
        <authorList>
            <person name="Kisilev K.V."/>
            <person name="Bulgakov V.P."/>
        </authorList>
    </citation>
    <scope>NUCLEOTIDE SEQUENCE [GENOMIC DNA]</scope>
</reference>
<proteinExistence type="inferred from homology"/>
<feature type="chain" id="PRO_0000421067" description="Cytokinin-beta-glucosidase 3">
    <location>
        <begin position="1"/>
        <end position="180"/>
    </location>
</feature>